<organism>
    <name type="scientific">Francisella tularensis subsp. mediasiatica (strain FSC147)</name>
    <dbReference type="NCBI Taxonomy" id="441952"/>
    <lineage>
        <taxon>Bacteria</taxon>
        <taxon>Pseudomonadati</taxon>
        <taxon>Pseudomonadota</taxon>
        <taxon>Gammaproteobacteria</taxon>
        <taxon>Thiotrichales</taxon>
        <taxon>Francisellaceae</taxon>
        <taxon>Francisella</taxon>
    </lineage>
</organism>
<proteinExistence type="inferred from homology"/>
<gene>
    <name evidence="1" type="primary">pgi</name>
    <name type="ordered locus">FTM_1328</name>
</gene>
<name>G6PI_FRATM</name>
<evidence type="ECO:0000255" key="1">
    <source>
        <dbReference type="HAMAP-Rule" id="MF_00473"/>
    </source>
</evidence>
<dbReference type="EC" id="5.3.1.9" evidence="1"/>
<dbReference type="EMBL" id="CP000915">
    <property type="protein sequence ID" value="ACD31171.1"/>
    <property type="molecule type" value="Genomic_DNA"/>
</dbReference>
<dbReference type="SMR" id="B2SDF7"/>
<dbReference type="KEGG" id="ftm:FTM_1328"/>
<dbReference type="HOGENOM" id="CLU_017947_3_1_6"/>
<dbReference type="UniPathway" id="UPA00109">
    <property type="reaction ID" value="UER00181"/>
</dbReference>
<dbReference type="UniPathway" id="UPA00138"/>
<dbReference type="GO" id="GO:0005829">
    <property type="term" value="C:cytosol"/>
    <property type="evidence" value="ECO:0007669"/>
    <property type="project" value="TreeGrafter"/>
</dbReference>
<dbReference type="GO" id="GO:0097367">
    <property type="term" value="F:carbohydrate derivative binding"/>
    <property type="evidence" value="ECO:0007669"/>
    <property type="project" value="InterPro"/>
</dbReference>
<dbReference type="GO" id="GO:0004347">
    <property type="term" value="F:glucose-6-phosphate isomerase activity"/>
    <property type="evidence" value="ECO:0007669"/>
    <property type="project" value="UniProtKB-UniRule"/>
</dbReference>
<dbReference type="GO" id="GO:0048029">
    <property type="term" value="F:monosaccharide binding"/>
    <property type="evidence" value="ECO:0007669"/>
    <property type="project" value="TreeGrafter"/>
</dbReference>
<dbReference type="GO" id="GO:0006094">
    <property type="term" value="P:gluconeogenesis"/>
    <property type="evidence" value="ECO:0007669"/>
    <property type="project" value="UniProtKB-UniRule"/>
</dbReference>
<dbReference type="GO" id="GO:0051156">
    <property type="term" value="P:glucose 6-phosphate metabolic process"/>
    <property type="evidence" value="ECO:0007669"/>
    <property type="project" value="TreeGrafter"/>
</dbReference>
<dbReference type="GO" id="GO:0006096">
    <property type="term" value="P:glycolytic process"/>
    <property type="evidence" value="ECO:0007669"/>
    <property type="project" value="UniProtKB-UniRule"/>
</dbReference>
<dbReference type="CDD" id="cd05015">
    <property type="entry name" value="SIS_PGI_1"/>
    <property type="match status" value="1"/>
</dbReference>
<dbReference type="CDD" id="cd05016">
    <property type="entry name" value="SIS_PGI_2"/>
    <property type="match status" value="1"/>
</dbReference>
<dbReference type="Gene3D" id="1.10.1390.10">
    <property type="match status" value="1"/>
</dbReference>
<dbReference type="Gene3D" id="3.40.50.10490">
    <property type="entry name" value="Glucose-6-phosphate isomerase like protein, domain 1"/>
    <property type="match status" value="2"/>
</dbReference>
<dbReference type="HAMAP" id="MF_00473">
    <property type="entry name" value="G6P_isomerase"/>
    <property type="match status" value="1"/>
</dbReference>
<dbReference type="InterPro" id="IPR001672">
    <property type="entry name" value="G6P_Isomerase"/>
</dbReference>
<dbReference type="InterPro" id="IPR023096">
    <property type="entry name" value="G6P_Isomerase_C"/>
</dbReference>
<dbReference type="InterPro" id="IPR018189">
    <property type="entry name" value="Phosphoglucose_isomerase_CS"/>
</dbReference>
<dbReference type="InterPro" id="IPR046348">
    <property type="entry name" value="SIS_dom_sf"/>
</dbReference>
<dbReference type="InterPro" id="IPR035476">
    <property type="entry name" value="SIS_PGI_1"/>
</dbReference>
<dbReference type="InterPro" id="IPR035482">
    <property type="entry name" value="SIS_PGI_2"/>
</dbReference>
<dbReference type="NCBIfam" id="NF001211">
    <property type="entry name" value="PRK00179.1"/>
    <property type="match status" value="1"/>
</dbReference>
<dbReference type="PANTHER" id="PTHR11469">
    <property type="entry name" value="GLUCOSE-6-PHOSPHATE ISOMERASE"/>
    <property type="match status" value="1"/>
</dbReference>
<dbReference type="PANTHER" id="PTHR11469:SF1">
    <property type="entry name" value="GLUCOSE-6-PHOSPHATE ISOMERASE"/>
    <property type="match status" value="1"/>
</dbReference>
<dbReference type="Pfam" id="PF00342">
    <property type="entry name" value="PGI"/>
    <property type="match status" value="1"/>
</dbReference>
<dbReference type="PRINTS" id="PR00662">
    <property type="entry name" value="G6PISOMERASE"/>
</dbReference>
<dbReference type="SUPFAM" id="SSF53697">
    <property type="entry name" value="SIS domain"/>
    <property type="match status" value="1"/>
</dbReference>
<dbReference type="PROSITE" id="PS00765">
    <property type="entry name" value="P_GLUCOSE_ISOMERASE_1"/>
    <property type="match status" value="1"/>
</dbReference>
<dbReference type="PROSITE" id="PS00174">
    <property type="entry name" value="P_GLUCOSE_ISOMERASE_2"/>
    <property type="match status" value="1"/>
</dbReference>
<dbReference type="PROSITE" id="PS51463">
    <property type="entry name" value="P_GLUCOSE_ISOMERASE_3"/>
    <property type="match status" value="1"/>
</dbReference>
<reference key="1">
    <citation type="journal article" date="2009" name="PLoS Pathog.">
        <title>Molecular evolutionary consequences of niche restriction in Francisella tularensis, a facultative intracellular pathogen.</title>
        <authorList>
            <person name="Larsson P."/>
            <person name="Elfsmark D."/>
            <person name="Svensson K."/>
            <person name="Wikstroem P."/>
            <person name="Forsman M."/>
            <person name="Brettin T."/>
            <person name="Keim P."/>
            <person name="Johansson A."/>
        </authorList>
    </citation>
    <scope>NUCLEOTIDE SEQUENCE [LARGE SCALE GENOMIC DNA]</scope>
    <source>
        <strain>FSC147</strain>
    </source>
</reference>
<keyword id="KW-0963">Cytoplasm</keyword>
<keyword id="KW-0312">Gluconeogenesis</keyword>
<keyword id="KW-0324">Glycolysis</keyword>
<keyword id="KW-0413">Isomerase</keyword>
<accession>B2SDF7</accession>
<comment type="function">
    <text evidence="1">Catalyzes the reversible isomerization of glucose-6-phosphate to fructose-6-phosphate.</text>
</comment>
<comment type="catalytic activity">
    <reaction evidence="1">
        <text>alpha-D-glucose 6-phosphate = beta-D-fructose 6-phosphate</text>
        <dbReference type="Rhea" id="RHEA:11816"/>
        <dbReference type="ChEBI" id="CHEBI:57634"/>
        <dbReference type="ChEBI" id="CHEBI:58225"/>
        <dbReference type="EC" id="5.3.1.9"/>
    </reaction>
</comment>
<comment type="pathway">
    <text evidence="1">Carbohydrate biosynthesis; gluconeogenesis.</text>
</comment>
<comment type="pathway">
    <text evidence="1">Carbohydrate degradation; glycolysis; D-glyceraldehyde 3-phosphate and glycerone phosphate from D-glucose: step 2/4.</text>
</comment>
<comment type="subcellular location">
    <subcellularLocation>
        <location evidence="1">Cytoplasm</location>
    </subcellularLocation>
</comment>
<comment type="similarity">
    <text evidence="1">Belongs to the GPI family.</text>
</comment>
<sequence length="540" mass="61166">MLFCDDSKKYLKEQNINLKNEFDKDDKRVEKFSLKHQNIYFDYSKNLINDYILKSLLESAEKSSLKDKIKQMFNGAKINSTEHRAVLHTALRDLSSTPLIVDGQDIRQEVTKEKQRVKELVEKVVSGRWRGFSGKKITDIVNIGIGGSDLGPKMVVRALQPYHCTDLKVHFVSNVDADSLLQALHVVDPETTLFIIASKSFSTEETLLNSISAREWLLDHYEDEKAVANHFVAISSKLDKVKEFGIDLEHCYKMWDWVGGRYSLWSSIGMSIAFAIGYDNFEKLLAGAYSVDKHFKETEFSKNIPVIMALLASYYSCTYNSQSQALLPYDERLCYFVDYLQQADMESNGKSVNIAGETVNYQTGVVLWGGVGTNGQHAFHQLLHQGNIFIPVDFIAIATSHHNYDNHQQALLANCFAQSQALMFGQSYDMVYNELLKSGLNETQAKELAAHKVIPGNRPSTTILLDELSPYSLGALIALYEHKIFVQGVLWEINSYDQWGVELGKKLGKNILKAMNDDSSDEYQNLDDSTRQLIAKVKNK</sequence>
<feature type="chain" id="PRO_1000125727" description="Glucose-6-phosphate isomerase">
    <location>
        <begin position="1"/>
        <end position="540"/>
    </location>
</feature>
<feature type="active site" description="Proton donor" evidence="1">
    <location>
        <position position="346"/>
    </location>
</feature>
<feature type="active site" evidence="1">
    <location>
        <position position="377"/>
    </location>
</feature>
<feature type="active site" evidence="1">
    <location>
        <position position="505"/>
    </location>
</feature>
<protein>
    <recommendedName>
        <fullName evidence="1">Glucose-6-phosphate isomerase</fullName>
        <shortName evidence="1">GPI</shortName>
        <ecNumber evidence="1">5.3.1.9</ecNumber>
    </recommendedName>
    <alternativeName>
        <fullName evidence="1">Phosphoglucose isomerase</fullName>
        <shortName evidence="1">PGI</shortName>
    </alternativeName>
    <alternativeName>
        <fullName evidence="1">Phosphohexose isomerase</fullName>
        <shortName evidence="1">PHI</shortName>
    </alternativeName>
</protein>